<name>CYB_AMATZ</name>
<dbReference type="EMBL" id="U89180">
    <property type="protein sequence ID" value="AAD00675.1"/>
    <property type="molecule type" value="Genomic_DNA"/>
</dbReference>
<dbReference type="SMR" id="Q9ZZD8"/>
<dbReference type="GO" id="GO:0005743">
    <property type="term" value="C:mitochondrial inner membrane"/>
    <property type="evidence" value="ECO:0007669"/>
    <property type="project" value="UniProtKB-SubCell"/>
</dbReference>
<dbReference type="GO" id="GO:0045275">
    <property type="term" value="C:respiratory chain complex III"/>
    <property type="evidence" value="ECO:0007669"/>
    <property type="project" value="InterPro"/>
</dbReference>
<dbReference type="GO" id="GO:0046872">
    <property type="term" value="F:metal ion binding"/>
    <property type="evidence" value="ECO:0007669"/>
    <property type="project" value="UniProtKB-KW"/>
</dbReference>
<dbReference type="GO" id="GO:0008121">
    <property type="term" value="F:ubiquinol-cytochrome-c reductase activity"/>
    <property type="evidence" value="ECO:0007669"/>
    <property type="project" value="InterPro"/>
</dbReference>
<dbReference type="GO" id="GO:0006122">
    <property type="term" value="P:mitochondrial electron transport, ubiquinol to cytochrome c"/>
    <property type="evidence" value="ECO:0007669"/>
    <property type="project" value="TreeGrafter"/>
</dbReference>
<dbReference type="CDD" id="cd00290">
    <property type="entry name" value="cytochrome_b_C"/>
    <property type="match status" value="1"/>
</dbReference>
<dbReference type="CDD" id="cd00284">
    <property type="entry name" value="Cytochrome_b_N"/>
    <property type="match status" value="1"/>
</dbReference>
<dbReference type="FunFam" id="1.20.810.10:FF:000002">
    <property type="entry name" value="Cytochrome b"/>
    <property type="match status" value="1"/>
</dbReference>
<dbReference type="Gene3D" id="1.20.810.10">
    <property type="entry name" value="Cytochrome Bc1 Complex, Chain C"/>
    <property type="match status" value="1"/>
</dbReference>
<dbReference type="InterPro" id="IPR005798">
    <property type="entry name" value="Cyt_b/b6_C"/>
</dbReference>
<dbReference type="InterPro" id="IPR036150">
    <property type="entry name" value="Cyt_b/b6_C_sf"/>
</dbReference>
<dbReference type="InterPro" id="IPR005797">
    <property type="entry name" value="Cyt_b/b6_N"/>
</dbReference>
<dbReference type="InterPro" id="IPR027387">
    <property type="entry name" value="Cytb/b6-like_sf"/>
</dbReference>
<dbReference type="InterPro" id="IPR030689">
    <property type="entry name" value="Cytochrome_b"/>
</dbReference>
<dbReference type="InterPro" id="IPR048260">
    <property type="entry name" value="Cytochrome_b_C_euk/bac"/>
</dbReference>
<dbReference type="InterPro" id="IPR048259">
    <property type="entry name" value="Cytochrome_b_N_euk/bac"/>
</dbReference>
<dbReference type="InterPro" id="IPR016174">
    <property type="entry name" value="Di-haem_cyt_TM"/>
</dbReference>
<dbReference type="PANTHER" id="PTHR19271">
    <property type="entry name" value="CYTOCHROME B"/>
    <property type="match status" value="1"/>
</dbReference>
<dbReference type="PANTHER" id="PTHR19271:SF16">
    <property type="entry name" value="CYTOCHROME B"/>
    <property type="match status" value="1"/>
</dbReference>
<dbReference type="Pfam" id="PF00032">
    <property type="entry name" value="Cytochrom_B_C"/>
    <property type="match status" value="1"/>
</dbReference>
<dbReference type="Pfam" id="PF00033">
    <property type="entry name" value="Cytochrome_B"/>
    <property type="match status" value="1"/>
</dbReference>
<dbReference type="PIRSF" id="PIRSF038885">
    <property type="entry name" value="COB"/>
    <property type="match status" value="1"/>
</dbReference>
<dbReference type="SUPFAM" id="SSF81648">
    <property type="entry name" value="a domain/subunit of cytochrome bc1 complex (Ubiquinol-cytochrome c reductase)"/>
    <property type="match status" value="1"/>
</dbReference>
<dbReference type="SUPFAM" id="SSF81342">
    <property type="entry name" value="Transmembrane di-heme cytochromes"/>
    <property type="match status" value="1"/>
</dbReference>
<dbReference type="PROSITE" id="PS51003">
    <property type="entry name" value="CYTB_CTER"/>
    <property type="match status" value="1"/>
</dbReference>
<dbReference type="PROSITE" id="PS51002">
    <property type="entry name" value="CYTB_NTER"/>
    <property type="match status" value="1"/>
</dbReference>
<evidence type="ECO:0000250" key="1"/>
<evidence type="ECO:0000250" key="2">
    <source>
        <dbReference type="UniProtKB" id="P00157"/>
    </source>
</evidence>
<evidence type="ECO:0000255" key="3">
    <source>
        <dbReference type="PROSITE-ProRule" id="PRU00967"/>
    </source>
</evidence>
<evidence type="ECO:0000255" key="4">
    <source>
        <dbReference type="PROSITE-ProRule" id="PRU00968"/>
    </source>
</evidence>
<gene>
    <name type="primary">MT-CYB</name>
    <name type="synonym">COB</name>
    <name type="synonym">CYTB</name>
    <name type="synonym">MTCYB</name>
</gene>
<feature type="chain" id="PRO_0000060569" description="Cytochrome b">
    <location>
        <begin position="1"/>
        <end position="380"/>
    </location>
</feature>
<feature type="transmembrane region" description="Helical" evidence="2">
    <location>
        <begin position="34"/>
        <end position="54"/>
    </location>
</feature>
<feature type="transmembrane region" description="Helical" evidence="2">
    <location>
        <begin position="78"/>
        <end position="99"/>
    </location>
</feature>
<feature type="transmembrane region" description="Helical" evidence="2">
    <location>
        <begin position="114"/>
        <end position="134"/>
    </location>
</feature>
<feature type="transmembrane region" description="Helical" evidence="2">
    <location>
        <begin position="179"/>
        <end position="199"/>
    </location>
</feature>
<feature type="transmembrane region" description="Helical" evidence="2">
    <location>
        <begin position="227"/>
        <end position="247"/>
    </location>
</feature>
<feature type="transmembrane region" description="Helical" evidence="2">
    <location>
        <begin position="289"/>
        <end position="309"/>
    </location>
</feature>
<feature type="transmembrane region" description="Helical" evidence="2">
    <location>
        <begin position="321"/>
        <end position="341"/>
    </location>
</feature>
<feature type="transmembrane region" description="Helical" evidence="2">
    <location>
        <begin position="348"/>
        <end position="368"/>
    </location>
</feature>
<feature type="binding site" description="axial binding residue" evidence="2">
    <location>
        <position position="84"/>
    </location>
    <ligand>
        <name>heme b</name>
        <dbReference type="ChEBI" id="CHEBI:60344"/>
        <label>b562</label>
    </ligand>
    <ligandPart>
        <name>Fe</name>
        <dbReference type="ChEBI" id="CHEBI:18248"/>
    </ligandPart>
</feature>
<feature type="binding site" description="axial binding residue" evidence="2">
    <location>
        <position position="98"/>
    </location>
    <ligand>
        <name>heme b</name>
        <dbReference type="ChEBI" id="CHEBI:60344"/>
        <label>b566</label>
    </ligand>
    <ligandPart>
        <name>Fe</name>
        <dbReference type="ChEBI" id="CHEBI:18248"/>
    </ligandPart>
</feature>
<feature type="binding site" description="axial binding residue" evidence="2">
    <location>
        <position position="183"/>
    </location>
    <ligand>
        <name>heme b</name>
        <dbReference type="ChEBI" id="CHEBI:60344"/>
        <label>b562</label>
    </ligand>
    <ligandPart>
        <name>Fe</name>
        <dbReference type="ChEBI" id="CHEBI:18248"/>
    </ligandPart>
</feature>
<feature type="binding site" description="axial binding residue" evidence="2">
    <location>
        <position position="197"/>
    </location>
    <ligand>
        <name>heme b</name>
        <dbReference type="ChEBI" id="CHEBI:60344"/>
        <label>b566</label>
    </ligand>
    <ligandPart>
        <name>Fe</name>
        <dbReference type="ChEBI" id="CHEBI:18248"/>
    </ligandPart>
</feature>
<feature type="binding site" evidence="2">
    <location>
        <position position="202"/>
    </location>
    <ligand>
        <name>a ubiquinone</name>
        <dbReference type="ChEBI" id="CHEBI:16389"/>
    </ligand>
</feature>
<keyword id="KW-0249">Electron transport</keyword>
<keyword id="KW-0349">Heme</keyword>
<keyword id="KW-0408">Iron</keyword>
<keyword id="KW-0472">Membrane</keyword>
<keyword id="KW-0479">Metal-binding</keyword>
<keyword id="KW-0496">Mitochondrion</keyword>
<keyword id="KW-0999">Mitochondrion inner membrane</keyword>
<keyword id="KW-0679">Respiratory chain</keyword>
<keyword id="KW-0812">Transmembrane</keyword>
<keyword id="KW-1133">Transmembrane helix</keyword>
<keyword id="KW-0813">Transport</keyword>
<keyword id="KW-0830">Ubiquinone</keyword>
<comment type="function">
    <text evidence="2">Component of the ubiquinol-cytochrome c reductase complex (complex III or cytochrome b-c1 complex) that is part of the mitochondrial respiratory chain. The b-c1 complex mediates electron transfer from ubiquinol to cytochrome c. Contributes to the generation of a proton gradient across the mitochondrial membrane that is then used for ATP synthesis.</text>
</comment>
<comment type="cofactor">
    <cofactor evidence="2">
        <name>heme b</name>
        <dbReference type="ChEBI" id="CHEBI:60344"/>
    </cofactor>
    <text evidence="2">Binds 2 heme b groups non-covalently.</text>
</comment>
<comment type="subunit">
    <text evidence="2">The cytochrome bc1 complex contains 11 subunits: 3 respiratory subunits (MT-CYB, CYC1 and UQCRFS1), 2 core proteins (UQCRC1 and UQCRC2) and 6 low-molecular weight proteins (UQCRH/QCR6, UQCRB/QCR7, UQCRQ/QCR8, UQCR10/QCR9, UQCR11/QCR10 and a cleavage product of UQCRFS1). This cytochrome bc1 complex then forms a dimer.</text>
</comment>
<comment type="subcellular location">
    <subcellularLocation>
        <location evidence="2">Mitochondrion inner membrane</location>
        <topology evidence="2">Multi-pass membrane protein</topology>
    </subcellularLocation>
</comment>
<comment type="miscellaneous">
    <text evidence="1">Heme 1 (or BL or b562) is low-potential and absorbs at about 562 nm, and heme 2 (or BH or b566) is high-potential and absorbs at about 566 nm.</text>
</comment>
<comment type="similarity">
    <text evidence="3 4">Belongs to the cytochrome b family.</text>
</comment>
<comment type="caution">
    <text evidence="2">The full-length protein contains only eight transmembrane helices, not nine as predicted by bioinformatics tools.</text>
</comment>
<geneLocation type="mitochondrion"/>
<organism>
    <name type="scientific">Amazilia tzacatl</name>
    <name type="common">Rufous-tailed hummingbird</name>
    <dbReference type="NCBI Taxonomy" id="57392"/>
    <lineage>
        <taxon>Eukaryota</taxon>
        <taxon>Metazoa</taxon>
        <taxon>Chordata</taxon>
        <taxon>Craniata</taxon>
        <taxon>Vertebrata</taxon>
        <taxon>Euteleostomi</taxon>
        <taxon>Archelosauria</taxon>
        <taxon>Archosauria</taxon>
        <taxon>Dinosauria</taxon>
        <taxon>Saurischia</taxon>
        <taxon>Theropoda</taxon>
        <taxon>Coelurosauria</taxon>
        <taxon>Aves</taxon>
        <taxon>Neognathae</taxon>
        <taxon>Neoaves</taxon>
        <taxon>Strisores</taxon>
        <taxon>Apodiformes</taxon>
        <taxon>Trochilidae</taxon>
        <taxon>Amazilia</taxon>
    </lineage>
</organism>
<sequence>MAPNLRKSHPLLKMVNDSLIDLPTPSNISTWWNFGSLLGLCLMTQILTGLLLAMHYTADTTLAFSSVAHTCRNVQYGWLIRNLHANGASFFFICIYLHIGRGFYYGSYLYKETWNTGVILLLTLMATAFVGYVLPWGQMSFWGATVITNLFSAIPYIGQTLVEWAWGGFSVDNPTLTRFFALHFLLPFMIAGLTLIHLTFLHETGSNNPLGVSSNCDKIPFHPYFSTKDLLGFLLMIAPLLTLAMFSPNLLGDPENFTPANPLVTPPHIKPEWYFLFAYAILRSIPNKLGGVLALAASVLILFLAPFLHKSKQRTMTFRPLSQLLFWILVANLLILTWVGSQPVEHPFIIIGQIASLTYFTILLILFPLTSALENKMLNY</sequence>
<accession>Q9ZZD8</accession>
<protein>
    <recommendedName>
        <fullName>Cytochrome b</fullName>
    </recommendedName>
    <alternativeName>
        <fullName>Complex III subunit 3</fullName>
    </alternativeName>
    <alternativeName>
        <fullName>Complex III subunit III</fullName>
    </alternativeName>
    <alternativeName>
        <fullName>Cytochrome b-c1 complex subunit 3</fullName>
    </alternativeName>
    <alternativeName>
        <fullName>Ubiquinol-cytochrome-c reductase complex cytochrome b subunit</fullName>
    </alternativeName>
</protein>
<reference key="1">
    <citation type="journal article" date="2000" name="Mol. Phylogenet. Evol.">
        <title>Higher-level phylogeny of trogoniformes.</title>
        <authorList>
            <person name="Espinosa de los Monteros A."/>
        </authorList>
    </citation>
    <scope>NUCLEOTIDE SEQUENCE [GENOMIC DNA]</scope>
</reference>
<proteinExistence type="inferred from homology"/>